<reference key="1">
    <citation type="submission" date="2005-10" db="EMBL/GenBank/DDBJ databases">
        <title>Complete sequence of Pelobacter carbinolicus DSM 2380.</title>
        <authorList>
            <person name="Copeland A."/>
            <person name="Lucas S."/>
            <person name="Lapidus A."/>
            <person name="Barry K."/>
            <person name="Detter J.C."/>
            <person name="Glavina T."/>
            <person name="Hammon N."/>
            <person name="Israni S."/>
            <person name="Pitluck S."/>
            <person name="Chertkov O."/>
            <person name="Schmutz J."/>
            <person name="Larimer F."/>
            <person name="Land M."/>
            <person name="Kyrpides N."/>
            <person name="Ivanova N."/>
            <person name="Richardson P."/>
        </authorList>
    </citation>
    <scope>NUCLEOTIDE SEQUENCE [LARGE SCALE GENOMIC DNA]</scope>
    <source>
        <strain>DSM 2380 / NBRC 103641 / GraBd1</strain>
    </source>
</reference>
<comment type="catalytic activity">
    <reaction evidence="1">
        <text>tRNA(Cys) + L-cysteine + ATP = L-cysteinyl-tRNA(Cys) + AMP + diphosphate</text>
        <dbReference type="Rhea" id="RHEA:17773"/>
        <dbReference type="Rhea" id="RHEA-COMP:9661"/>
        <dbReference type="Rhea" id="RHEA-COMP:9679"/>
        <dbReference type="ChEBI" id="CHEBI:30616"/>
        <dbReference type="ChEBI" id="CHEBI:33019"/>
        <dbReference type="ChEBI" id="CHEBI:35235"/>
        <dbReference type="ChEBI" id="CHEBI:78442"/>
        <dbReference type="ChEBI" id="CHEBI:78517"/>
        <dbReference type="ChEBI" id="CHEBI:456215"/>
        <dbReference type="EC" id="6.1.1.16"/>
    </reaction>
</comment>
<comment type="cofactor">
    <cofactor evidence="1">
        <name>Zn(2+)</name>
        <dbReference type="ChEBI" id="CHEBI:29105"/>
    </cofactor>
    <text evidence="1">Binds 1 zinc ion per subunit.</text>
</comment>
<comment type="subunit">
    <text evidence="1">Monomer.</text>
</comment>
<comment type="subcellular location">
    <subcellularLocation>
        <location evidence="1">Cytoplasm</location>
    </subcellularLocation>
</comment>
<comment type="similarity">
    <text evidence="1">Belongs to the class-I aminoacyl-tRNA synthetase family.</text>
</comment>
<keyword id="KW-0030">Aminoacyl-tRNA synthetase</keyword>
<keyword id="KW-0067">ATP-binding</keyword>
<keyword id="KW-0963">Cytoplasm</keyword>
<keyword id="KW-0436">Ligase</keyword>
<keyword id="KW-0479">Metal-binding</keyword>
<keyword id="KW-0547">Nucleotide-binding</keyword>
<keyword id="KW-0648">Protein biosynthesis</keyword>
<keyword id="KW-1185">Reference proteome</keyword>
<keyword id="KW-0862">Zinc</keyword>
<organism>
    <name type="scientific">Syntrophotalea carbinolica (strain DSM 2380 / NBRC 103641 / GraBd1)</name>
    <name type="common">Pelobacter carbinolicus</name>
    <dbReference type="NCBI Taxonomy" id="338963"/>
    <lineage>
        <taxon>Bacteria</taxon>
        <taxon>Pseudomonadati</taxon>
        <taxon>Thermodesulfobacteriota</taxon>
        <taxon>Desulfuromonadia</taxon>
        <taxon>Desulfuromonadales</taxon>
        <taxon>Syntrophotaleaceae</taxon>
        <taxon>Syntrophotalea</taxon>
    </lineage>
</organism>
<protein>
    <recommendedName>
        <fullName evidence="1">Cysteine--tRNA ligase</fullName>
        <ecNumber evidence="1">6.1.1.16</ecNumber>
    </recommendedName>
    <alternativeName>
        <fullName evidence="1">Cysteinyl-tRNA synthetase</fullName>
        <shortName evidence="1">CysRS</shortName>
    </alternativeName>
</protein>
<gene>
    <name evidence="1" type="primary">cysS</name>
    <name type="ordered locus">Pcar_0100</name>
</gene>
<sequence>MSLRVYNTMTGRKEEFEPLQPGKVGMYVCGVTVYDYCHIGHARANVVFDIIYRYLQFIGFDVTYVRNYTDVDDKIIKRANERGISSDTLAGEFIQAFDEDMNRLGLAEPTIQPKATCHIDHIVNLVQRLIDRGIAYESQGDVYFSVEDFPSYLKLSKRNMDEMRSGARITPGEQKRNPMDFALWKAAKPGEPSWESPWGPGRPGWHIECSAMSMEYLGESFDIHGGGKDLVFPHHENEIAQSEGATGKPFVKYWLHNGFVNVNQEKMSKSLGNFFTIRDILQTYDPEVLRFFILTAHYRSPIDFSDQNLQDARLGLSRFYEGLHAASEVLAACPPGDVTSEAGATLENVFREAMDDDFNTAAAIGHLFDAVRTINRLITEKGFRKNREKVAQVRALYDALLKLGGVLGLFVSDPAAWLKQMNLAMLATTGYTESDIEDFIRQRQEARKNKDFARADEIRDELAAKGIQLLDGPQGTAWKAR</sequence>
<dbReference type="EC" id="6.1.1.16" evidence="1"/>
<dbReference type="EMBL" id="CP000142">
    <property type="protein sequence ID" value="ABA87363.1"/>
    <property type="molecule type" value="Genomic_DNA"/>
</dbReference>
<dbReference type="RefSeq" id="WP_011339752.1">
    <property type="nucleotide sequence ID" value="NC_007498.2"/>
</dbReference>
<dbReference type="SMR" id="Q3A8C9"/>
<dbReference type="STRING" id="338963.Pcar_0100"/>
<dbReference type="KEGG" id="pca:Pcar_0100"/>
<dbReference type="eggNOG" id="COG0215">
    <property type="taxonomic scope" value="Bacteria"/>
</dbReference>
<dbReference type="HOGENOM" id="CLU_013528_0_1_7"/>
<dbReference type="OrthoDB" id="9815130at2"/>
<dbReference type="Proteomes" id="UP000002534">
    <property type="component" value="Chromosome"/>
</dbReference>
<dbReference type="GO" id="GO:0005829">
    <property type="term" value="C:cytosol"/>
    <property type="evidence" value="ECO:0007669"/>
    <property type="project" value="TreeGrafter"/>
</dbReference>
<dbReference type="GO" id="GO:0005524">
    <property type="term" value="F:ATP binding"/>
    <property type="evidence" value="ECO:0007669"/>
    <property type="project" value="UniProtKB-UniRule"/>
</dbReference>
<dbReference type="GO" id="GO:0004817">
    <property type="term" value="F:cysteine-tRNA ligase activity"/>
    <property type="evidence" value="ECO:0007669"/>
    <property type="project" value="UniProtKB-UniRule"/>
</dbReference>
<dbReference type="GO" id="GO:0008270">
    <property type="term" value="F:zinc ion binding"/>
    <property type="evidence" value="ECO:0007669"/>
    <property type="project" value="UniProtKB-UniRule"/>
</dbReference>
<dbReference type="GO" id="GO:0006423">
    <property type="term" value="P:cysteinyl-tRNA aminoacylation"/>
    <property type="evidence" value="ECO:0007669"/>
    <property type="project" value="UniProtKB-UniRule"/>
</dbReference>
<dbReference type="CDD" id="cd00672">
    <property type="entry name" value="CysRS_core"/>
    <property type="match status" value="1"/>
</dbReference>
<dbReference type="FunFam" id="3.40.50.620:FF:000009">
    <property type="entry name" value="Cysteine--tRNA ligase"/>
    <property type="match status" value="1"/>
</dbReference>
<dbReference type="Gene3D" id="1.20.120.1910">
    <property type="entry name" value="Cysteine-tRNA ligase, C-terminal anti-codon recognition domain"/>
    <property type="match status" value="1"/>
</dbReference>
<dbReference type="Gene3D" id="3.40.50.620">
    <property type="entry name" value="HUPs"/>
    <property type="match status" value="1"/>
</dbReference>
<dbReference type="HAMAP" id="MF_00041">
    <property type="entry name" value="Cys_tRNA_synth"/>
    <property type="match status" value="1"/>
</dbReference>
<dbReference type="InterPro" id="IPR015803">
    <property type="entry name" value="Cys-tRNA-ligase"/>
</dbReference>
<dbReference type="InterPro" id="IPR015273">
    <property type="entry name" value="Cys-tRNA-synt_Ia_DALR"/>
</dbReference>
<dbReference type="InterPro" id="IPR024909">
    <property type="entry name" value="Cys-tRNA/MSH_ligase"/>
</dbReference>
<dbReference type="InterPro" id="IPR056411">
    <property type="entry name" value="CysS_C"/>
</dbReference>
<dbReference type="InterPro" id="IPR014729">
    <property type="entry name" value="Rossmann-like_a/b/a_fold"/>
</dbReference>
<dbReference type="InterPro" id="IPR032678">
    <property type="entry name" value="tRNA-synt_1_cat_dom"/>
</dbReference>
<dbReference type="InterPro" id="IPR009080">
    <property type="entry name" value="tRNAsynth_Ia_anticodon-bd"/>
</dbReference>
<dbReference type="NCBIfam" id="TIGR00435">
    <property type="entry name" value="cysS"/>
    <property type="match status" value="1"/>
</dbReference>
<dbReference type="PANTHER" id="PTHR10890:SF3">
    <property type="entry name" value="CYSTEINE--TRNA LIGASE, CYTOPLASMIC"/>
    <property type="match status" value="1"/>
</dbReference>
<dbReference type="PANTHER" id="PTHR10890">
    <property type="entry name" value="CYSTEINYL-TRNA SYNTHETASE"/>
    <property type="match status" value="1"/>
</dbReference>
<dbReference type="Pfam" id="PF23493">
    <property type="entry name" value="CysS_C"/>
    <property type="match status" value="1"/>
</dbReference>
<dbReference type="Pfam" id="PF09190">
    <property type="entry name" value="DALR_2"/>
    <property type="match status" value="1"/>
</dbReference>
<dbReference type="Pfam" id="PF01406">
    <property type="entry name" value="tRNA-synt_1e"/>
    <property type="match status" value="1"/>
</dbReference>
<dbReference type="PRINTS" id="PR00983">
    <property type="entry name" value="TRNASYNTHCYS"/>
</dbReference>
<dbReference type="SMART" id="SM00840">
    <property type="entry name" value="DALR_2"/>
    <property type="match status" value="1"/>
</dbReference>
<dbReference type="SUPFAM" id="SSF47323">
    <property type="entry name" value="Anticodon-binding domain of a subclass of class I aminoacyl-tRNA synthetases"/>
    <property type="match status" value="1"/>
</dbReference>
<dbReference type="SUPFAM" id="SSF52374">
    <property type="entry name" value="Nucleotidylyl transferase"/>
    <property type="match status" value="1"/>
</dbReference>
<evidence type="ECO:0000255" key="1">
    <source>
        <dbReference type="HAMAP-Rule" id="MF_00041"/>
    </source>
</evidence>
<accession>Q3A8C9</accession>
<proteinExistence type="inferred from homology"/>
<feature type="chain" id="PRO_0000240931" description="Cysteine--tRNA ligase">
    <location>
        <begin position="1"/>
        <end position="481"/>
    </location>
</feature>
<feature type="short sequence motif" description="'HIGH' region">
    <location>
        <begin position="31"/>
        <end position="41"/>
    </location>
</feature>
<feature type="short sequence motif" description="'KMSKS' region">
    <location>
        <begin position="266"/>
        <end position="270"/>
    </location>
</feature>
<feature type="binding site" evidence="1">
    <location>
        <position position="29"/>
    </location>
    <ligand>
        <name>Zn(2+)</name>
        <dbReference type="ChEBI" id="CHEBI:29105"/>
    </ligand>
</feature>
<feature type="binding site" evidence="1">
    <location>
        <position position="209"/>
    </location>
    <ligand>
        <name>Zn(2+)</name>
        <dbReference type="ChEBI" id="CHEBI:29105"/>
    </ligand>
</feature>
<feature type="binding site" evidence="1">
    <location>
        <position position="234"/>
    </location>
    <ligand>
        <name>Zn(2+)</name>
        <dbReference type="ChEBI" id="CHEBI:29105"/>
    </ligand>
</feature>
<feature type="binding site" evidence="1">
    <location>
        <position position="238"/>
    </location>
    <ligand>
        <name>Zn(2+)</name>
        <dbReference type="ChEBI" id="CHEBI:29105"/>
    </ligand>
</feature>
<feature type="binding site" evidence="1">
    <location>
        <position position="269"/>
    </location>
    <ligand>
        <name>ATP</name>
        <dbReference type="ChEBI" id="CHEBI:30616"/>
    </ligand>
</feature>
<name>SYC_SYNC1</name>